<evidence type="ECO:0000255" key="1">
    <source>
        <dbReference type="HAMAP-Rule" id="MF_00514"/>
    </source>
</evidence>
<evidence type="ECO:0000305" key="2"/>
<sequence length="68" mass="7797">MPKLKTKSAVKKRFKLTASGKVIASQAGKKHFMRRRTKAQIRNLRGTTILCPQDGYNIKKYFLPYGIN</sequence>
<keyword id="KW-0687">Ribonucleoprotein</keyword>
<keyword id="KW-0689">Ribosomal protein</keyword>
<proteinExistence type="inferred from homology"/>
<dbReference type="EMBL" id="CP001227">
    <property type="protein sequence ID" value="ACR47462.1"/>
    <property type="molecule type" value="Genomic_DNA"/>
</dbReference>
<dbReference type="RefSeq" id="WP_004997924.1">
    <property type="nucleotide sequence ID" value="NC_012730.1"/>
</dbReference>
<dbReference type="SMR" id="C4K1L1"/>
<dbReference type="GeneID" id="95361427"/>
<dbReference type="KEGG" id="rpk:RPR_03630"/>
<dbReference type="HOGENOM" id="CLU_169643_2_1_5"/>
<dbReference type="Proteomes" id="UP000005015">
    <property type="component" value="Chromosome"/>
</dbReference>
<dbReference type="GO" id="GO:0022625">
    <property type="term" value="C:cytosolic large ribosomal subunit"/>
    <property type="evidence" value="ECO:0007669"/>
    <property type="project" value="TreeGrafter"/>
</dbReference>
<dbReference type="GO" id="GO:0003735">
    <property type="term" value="F:structural constituent of ribosome"/>
    <property type="evidence" value="ECO:0007669"/>
    <property type="project" value="InterPro"/>
</dbReference>
<dbReference type="GO" id="GO:0006412">
    <property type="term" value="P:translation"/>
    <property type="evidence" value="ECO:0007669"/>
    <property type="project" value="UniProtKB-UniRule"/>
</dbReference>
<dbReference type="FunFam" id="4.10.410.60:FF:000001">
    <property type="entry name" value="50S ribosomal protein L35"/>
    <property type="match status" value="1"/>
</dbReference>
<dbReference type="Gene3D" id="4.10.410.60">
    <property type="match status" value="1"/>
</dbReference>
<dbReference type="HAMAP" id="MF_00514">
    <property type="entry name" value="Ribosomal_bL35"/>
    <property type="match status" value="1"/>
</dbReference>
<dbReference type="InterPro" id="IPR001706">
    <property type="entry name" value="Ribosomal_bL35"/>
</dbReference>
<dbReference type="InterPro" id="IPR021137">
    <property type="entry name" value="Ribosomal_bL35-like"/>
</dbReference>
<dbReference type="InterPro" id="IPR018265">
    <property type="entry name" value="Ribosomal_bL35_CS"/>
</dbReference>
<dbReference type="InterPro" id="IPR037229">
    <property type="entry name" value="Ribosomal_bL35_sf"/>
</dbReference>
<dbReference type="NCBIfam" id="TIGR00001">
    <property type="entry name" value="rpmI_bact"/>
    <property type="match status" value="1"/>
</dbReference>
<dbReference type="PANTHER" id="PTHR33343">
    <property type="entry name" value="54S RIBOSOMAL PROTEIN BL35M"/>
    <property type="match status" value="1"/>
</dbReference>
<dbReference type="PANTHER" id="PTHR33343:SF1">
    <property type="entry name" value="LARGE RIBOSOMAL SUBUNIT PROTEIN BL35M"/>
    <property type="match status" value="1"/>
</dbReference>
<dbReference type="Pfam" id="PF01632">
    <property type="entry name" value="Ribosomal_L35p"/>
    <property type="match status" value="1"/>
</dbReference>
<dbReference type="PRINTS" id="PR00064">
    <property type="entry name" value="RIBOSOMALL35"/>
</dbReference>
<dbReference type="SUPFAM" id="SSF143034">
    <property type="entry name" value="L35p-like"/>
    <property type="match status" value="1"/>
</dbReference>
<dbReference type="PROSITE" id="PS00936">
    <property type="entry name" value="RIBOSOMAL_L35"/>
    <property type="match status" value="1"/>
</dbReference>
<gene>
    <name evidence="1" type="primary">rpmI</name>
    <name type="ordered locus">RPR_03630</name>
</gene>
<protein>
    <recommendedName>
        <fullName evidence="1">Large ribosomal subunit protein bL35</fullName>
    </recommendedName>
    <alternativeName>
        <fullName evidence="2">50S ribosomal protein L35</fullName>
    </alternativeName>
</protein>
<comment type="similarity">
    <text evidence="1">Belongs to the bacterial ribosomal protein bL35 family.</text>
</comment>
<organism>
    <name type="scientific">Rickettsia peacockii (strain Rustic)</name>
    <dbReference type="NCBI Taxonomy" id="562019"/>
    <lineage>
        <taxon>Bacteria</taxon>
        <taxon>Pseudomonadati</taxon>
        <taxon>Pseudomonadota</taxon>
        <taxon>Alphaproteobacteria</taxon>
        <taxon>Rickettsiales</taxon>
        <taxon>Rickettsiaceae</taxon>
        <taxon>Rickettsieae</taxon>
        <taxon>Rickettsia</taxon>
        <taxon>spotted fever group</taxon>
    </lineage>
</organism>
<feature type="chain" id="PRO_1000211713" description="Large ribosomal subunit protein bL35">
    <location>
        <begin position="1"/>
        <end position="68"/>
    </location>
</feature>
<reference key="1">
    <citation type="journal article" date="2009" name="PLoS ONE">
        <title>Genome sequence of the endosymbiont Rickettsia peacockii and comparison with virulent Rickettsia rickettsii: identification of virulence factors.</title>
        <authorList>
            <person name="Felsheim R.F."/>
            <person name="Kurtti T.J."/>
            <person name="Munderloh U.G."/>
        </authorList>
    </citation>
    <scope>NUCLEOTIDE SEQUENCE [LARGE SCALE GENOMIC DNA]</scope>
    <source>
        <strain>Rustic</strain>
    </source>
</reference>
<accession>C4K1L1</accession>
<name>RL35_RICPU</name>